<evidence type="ECO:0000255" key="1">
    <source>
        <dbReference type="HAMAP-Rule" id="MF_01227"/>
    </source>
</evidence>
<feature type="chain" id="PRO_0000266091" description="CTP synthase">
    <location>
        <begin position="1"/>
        <end position="537"/>
    </location>
</feature>
<feature type="domain" description="Glutamine amidotransferase type-1" evidence="1">
    <location>
        <begin position="294"/>
        <end position="533"/>
    </location>
</feature>
<feature type="region of interest" description="Amidoligase domain" evidence="1">
    <location>
        <begin position="1"/>
        <end position="268"/>
    </location>
</feature>
<feature type="active site" description="Nucleophile; for glutamine hydrolysis" evidence="1">
    <location>
        <position position="380"/>
    </location>
</feature>
<feature type="active site" evidence="1">
    <location>
        <position position="506"/>
    </location>
</feature>
<feature type="active site" evidence="1">
    <location>
        <position position="508"/>
    </location>
</feature>
<feature type="binding site" evidence="1">
    <location>
        <position position="14"/>
    </location>
    <ligand>
        <name>CTP</name>
        <dbReference type="ChEBI" id="CHEBI:37563"/>
        <note>allosteric inhibitor</note>
    </ligand>
</feature>
<feature type="binding site" evidence="1">
    <location>
        <position position="14"/>
    </location>
    <ligand>
        <name>UTP</name>
        <dbReference type="ChEBI" id="CHEBI:46398"/>
    </ligand>
</feature>
<feature type="binding site" evidence="1">
    <location>
        <begin position="15"/>
        <end position="20"/>
    </location>
    <ligand>
        <name>ATP</name>
        <dbReference type="ChEBI" id="CHEBI:30616"/>
    </ligand>
</feature>
<feature type="binding site" evidence="1">
    <location>
        <position position="55"/>
    </location>
    <ligand>
        <name>L-glutamine</name>
        <dbReference type="ChEBI" id="CHEBI:58359"/>
    </ligand>
</feature>
<feature type="binding site" evidence="1">
    <location>
        <position position="72"/>
    </location>
    <ligand>
        <name>ATP</name>
        <dbReference type="ChEBI" id="CHEBI:30616"/>
    </ligand>
</feature>
<feature type="binding site" evidence="1">
    <location>
        <position position="72"/>
    </location>
    <ligand>
        <name>Mg(2+)</name>
        <dbReference type="ChEBI" id="CHEBI:18420"/>
    </ligand>
</feature>
<feature type="binding site" evidence="1">
    <location>
        <position position="142"/>
    </location>
    <ligand>
        <name>Mg(2+)</name>
        <dbReference type="ChEBI" id="CHEBI:18420"/>
    </ligand>
</feature>
<feature type="binding site" evidence="1">
    <location>
        <begin position="149"/>
        <end position="151"/>
    </location>
    <ligand>
        <name>CTP</name>
        <dbReference type="ChEBI" id="CHEBI:37563"/>
        <note>allosteric inhibitor</note>
    </ligand>
</feature>
<feature type="binding site" evidence="1">
    <location>
        <begin position="188"/>
        <end position="193"/>
    </location>
    <ligand>
        <name>CTP</name>
        <dbReference type="ChEBI" id="CHEBI:37563"/>
        <note>allosteric inhibitor</note>
    </ligand>
</feature>
<feature type="binding site" evidence="1">
    <location>
        <begin position="188"/>
        <end position="193"/>
    </location>
    <ligand>
        <name>UTP</name>
        <dbReference type="ChEBI" id="CHEBI:46398"/>
    </ligand>
</feature>
<feature type="binding site" evidence="1">
    <location>
        <position position="224"/>
    </location>
    <ligand>
        <name>CTP</name>
        <dbReference type="ChEBI" id="CHEBI:37563"/>
        <note>allosteric inhibitor</note>
    </ligand>
</feature>
<feature type="binding site" evidence="1">
    <location>
        <position position="224"/>
    </location>
    <ligand>
        <name>UTP</name>
        <dbReference type="ChEBI" id="CHEBI:46398"/>
    </ligand>
</feature>
<feature type="binding site" evidence="1">
    <location>
        <position position="353"/>
    </location>
    <ligand>
        <name>L-glutamine</name>
        <dbReference type="ChEBI" id="CHEBI:58359"/>
    </ligand>
</feature>
<feature type="binding site" evidence="1">
    <location>
        <begin position="381"/>
        <end position="384"/>
    </location>
    <ligand>
        <name>L-glutamine</name>
        <dbReference type="ChEBI" id="CHEBI:58359"/>
    </ligand>
</feature>
<feature type="binding site" evidence="1">
    <location>
        <position position="404"/>
    </location>
    <ligand>
        <name>L-glutamine</name>
        <dbReference type="ChEBI" id="CHEBI:58359"/>
    </ligand>
</feature>
<feature type="binding site" evidence="1">
    <location>
        <position position="461"/>
    </location>
    <ligand>
        <name>L-glutamine</name>
        <dbReference type="ChEBI" id="CHEBI:58359"/>
    </ligand>
</feature>
<accession>Q5L5S1</accession>
<sequence length="537" mass="60162">MSFKCIFLTGGVVSSLGKGLTAASLALLLERQGLKVAMLKLDPYLNVDPGTMNPYEHGEVYVTNDGIETDLDLGHYHRFSSVNLSRYSTATSGQIYARVIKKERDGLYLGSTVQVIPHITNEIIEVILECARENHPDVLIVEIGGTVGDIESLPFLEAIRQFRYEHAEDCFSIHMTYVPYLQAAGEVKTKPTQHSVQSLRSIGIIPDAILCRSEAPLSSEVKKKISLFCNVPSTAVFNVVDVEHSIYEMPLMLSQEKISTFITEKLGLFTKKEDLSDWEMLVERLRHPLPNKIRLGLVGKYVQHKDAYKSVFESITHAALSLNCSVELFPLDSDDPHFLETLELCDGCLVPGGFGSRGWEGKIIAAKLCRERGIPYFGICLGMQVLVVEYARHVLHLEHANSTEMDKDTPDPVICMLDWQASLIATGGTMRLGAYPCALSPGSKVYAMYGQPEIMERHRHRYEVNFNYIQQLKDHGLDIVGTCPEQGLCEIVEIKDHPWMIGVQFHPEFLSKLIKPHPLFVGFIEAALLHSRNKTYV</sequence>
<keyword id="KW-0067">ATP-binding</keyword>
<keyword id="KW-0315">Glutamine amidotransferase</keyword>
<keyword id="KW-0436">Ligase</keyword>
<keyword id="KW-0460">Magnesium</keyword>
<keyword id="KW-0479">Metal-binding</keyword>
<keyword id="KW-0547">Nucleotide-binding</keyword>
<keyword id="KW-0665">Pyrimidine biosynthesis</keyword>
<dbReference type="EC" id="6.3.4.2" evidence="1"/>
<dbReference type="EMBL" id="CR848038">
    <property type="protein sequence ID" value="CAH64018.1"/>
    <property type="molecule type" value="Genomic_DNA"/>
</dbReference>
<dbReference type="RefSeq" id="WP_006344193.1">
    <property type="nucleotide sequence ID" value="NC_004552.2"/>
</dbReference>
<dbReference type="SMR" id="Q5L5S1"/>
<dbReference type="MEROPS" id="C26.964"/>
<dbReference type="KEGG" id="cab:CAB570"/>
<dbReference type="eggNOG" id="COG0504">
    <property type="taxonomic scope" value="Bacteria"/>
</dbReference>
<dbReference type="HOGENOM" id="CLU_011675_5_0_0"/>
<dbReference type="OrthoDB" id="9801107at2"/>
<dbReference type="UniPathway" id="UPA00159">
    <property type="reaction ID" value="UER00277"/>
</dbReference>
<dbReference type="Proteomes" id="UP000001012">
    <property type="component" value="Chromosome"/>
</dbReference>
<dbReference type="GO" id="GO:0005829">
    <property type="term" value="C:cytosol"/>
    <property type="evidence" value="ECO:0007669"/>
    <property type="project" value="TreeGrafter"/>
</dbReference>
<dbReference type="GO" id="GO:0005524">
    <property type="term" value="F:ATP binding"/>
    <property type="evidence" value="ECO:0007669"/>
    <property type="project" value="UniProtKB-KW"/>
</dbReference>
<dbReference type="GO" id="GO:0003883">
    <property type="term" value="F:CTP synthase activity"/>
    <property type="evidence" value="ECO:0007669"/>
    <property type="project" value="UniProtKB-UniRule"/>
</dbReference>
<dbReference type="GO" id="GO:0004359">
    <property type="term" value="F:glutaminase activity"/>
    <property type="evidence" value="ECO:0007669"/>
    <property type="project" value="RHEA"/>
</dbReference>
<dbReference type="GO" id="GO:0042802">
    <property type="term" value="F:identical protein binding"/>
    <property type="evidence" value="ECO:0007669"/>
    <property type="project" value="TreeGrafter"/>
</dbReference>
<dbReference type="GO" id="GO:0046872">
    <property type="term" value="F:metal ion binding"/>
    <property type="evidence" value="ECO:0007669"/>
    <property type="project" value="UniProtKB-KW"/>
</dbReference>
<dbReference type="GO" id="GO:0044210">
    <property type="term" value="P:'de novo' CTP biosynthetic process"/>
    <property type="evidence" value="ECO:0007669"/>
    <property type="project" value="UniProtKB-UniRule"/>
</dbReference>
<dbReference type="GO" id="GO:0019856">
    <property type="term" value="P:pyrimidine nucleobase biosynthetic process"/>
    <property type="evidence" value="ECO:0007669"/>
    <property type="project" value="TreeGrafter"/>
</dbReference>
<dbReference type="CDD" id="cd03113">
    <property type="entry name" value="CTPS_N"/>
    <property type="match status" value="1"/>
</dbReference>
<dbReference type="CDD" id="cd01746">
    <property type="entry name" value="GATase1_CTP_Synthase"/>
    <property type="match status" value="1"/>
</dbReference>
<dbReference type="FunFam" id="3.40.50.300:FF:000009">
    <property type="entry name" value="CTP synthase"/>
    <property type="match status" value="1"/>
</dbReference>
<dbReference type="FunFam" id="3.40.50.880:FF:000002">
    <property type="entry name" value="CTP synthase"/>
    <property type="match status" value="1"/>
</dbReference>
<dbReference type="Gene3D" id="3.40.50.880">
    <property type="match status" value="1"/>
</dbReference>
<dbReference type="Gene3D" id="3.40.50.300">
    <property type="entry name" value="P-loop containing nucleotide triphosphate hydrolases"/>
    <property type="match status" value="1"/>
</dbReference>
<dbReference type="HAMAP" id="MF_01227">
    <property type="entry name" value="PyrG"/>
    <property type="match status" value="1"/>
</dbReference>
<dbReference type="InterPro" id="IPR029062">
    <property type="entry name" value="Class_I_gatase-like"/>
</dbReference>
<dbReference type="InterPro" id="IPR004468">
    <property type="entry name" value="CTP_synthase"/>
</dbReference>
<dbReference type="InterPro" id="IPR017456">
    <property type="entry name" value="CTP_synthase_N"/>
</dbReference>
<dbReference type="InterPro" id="IPR017926">
    <property type="entry name" value="GATASE"/>
</dbReference>
<dbReference type="InterPro" id="IPR033828">
    <property type="entry name" value="GATase1_CTP_Synthase"/>
</dbReference>
<dbReference type="InterPro" id="IPR027417">
    <property type="entry name" value="P-loop_NTPase"/>
</dbReference>
<dbReference type="NCBIfam" id="NF003792">
    <property type="entry name" value="PRK05380.1"/>
    <property type="match status" value="1"/>
</dbReference>
<dbReference type="NCBIfam" id="TIGR00337">
    <property type="entry name" value="PyrG"/>
    <property type="match status" value="1"/>
</dbReference>
<dbReference type="PANTHER" id="PTHR11550">
    <property type="entry name" value="CTP SYNTHASE"/>
    <property type="match status" value="1"/>
</dbReference>
<dbReference type="PANTHER" id="PTHR11550:SF0">
    <property type="entry name" value="CTP SYNTHASE-RELATED"/>
    <property type="match status" value="1"/>
</dbReference>
<dbReference type="Pfam" id="PF06418">
    <property type="entry name" value="CTP_synth_N"/>
    <property type="match status" value="1"/>
</dbReference>
<dbReference type="Pfam" id="PF00117">
    <property type="entry name" value="GATase"/>
    <property type="match status" value="1"/>
</dbReference>
<dbReference type="SUPFAM" id="SSF52317">
    <property type="entry name" value="Class I glutamine amidotransferase-like"/>
    <property type="match status" value="1"/>
</dbReference>
<dbReference type="SUPFAM" id="SSF52540">
    <property type="entry name" value="P-loop containing nucleoside triphosphate hydrolases"/>
    <property type="match status" value="1"/>
</dbReference>
<dbReference type="PROSITE" id="PS51273">
    <property type="entry name" value="GATASE_TYPE_1"/>
    <property type="match status" value="1"/>
</dbReference>
<protein>
    <recommendedName>
        <fullName evidence="1">CTP synthase</fullName>
        <ecNumber evidence="1">6.3.4.2</ecNumber>
    </recommendedName>
    <alternativeName>
        <fullName evidence="1">Cytidine 5'-triphosphate synthase</fullName>
    </alternativeName>
    <alternativeName>
        <fullName evidence="1">Cytidine triphosphate synthetase</fullName>
        <shortName evidence="1">CTP synthetase</shortName>
        <shortName evidence="1">CTPS</shortName>
    </alternativeName>
    <alternativeName>
        <fullName evidence="1">UTP--ammonia ligase</fullName>
    </alternativeName>
</protein>
<comment type="function">
    <text evidence="1">Catalyzes the ATP-dependent amination of UTP to CTP with either L-glutamine or ammonia as the source of nitrogen. Regulates intracellular CTP levels through interactions with the four ribonucleotide triphosphates.</text>
</comment>
<comment type="catalytic activity">
    <reaction evidence="1">
        <text>UTP + L-glutamine + ATP + H2O = CTP + L-glutamate + ADP + phosphate + 2 H(+)</text>
        <dbReference type="Rhea" id="RHEA:26426"/>
        <dbReference type="ChEBI" id="CHEBI:15377"/>
        <dbReference type="ChEBI" id="CHEBI:15378"/>
        <dbReference type="ChEBI" id="CHEBI:29985"/>
        <dbReference type="ChEBI" id="CHEBI:30616"/>
        <dbReference type="ChEBI" id="CHEBI:37563"/>
        <dbReference type="ChEBI" id="CHEBI:43474"/>
        <dbReference type="ChEBI" id="CHEBI:46398"/>
        <dbReference type="ChEBI" id="CHEBI:58359"/>
        <dbReference type="ChEBI" id="CHEBI:456216"/>
        <dbReference type="EC" id="6.3.4.2"/>
    </reaction>
</comment>
<comment type="catalytic activity">
    <reaction evidence="1">
        <text>L-glutamine + H2O = L-glutamate + NH4(+)</text>
        <dbReference type="Rhea" id="RHEA:15889"/>
        <dbReference type="ChEBI" id="CHEBI:15377"/>
        <dbReference type="ChEBI" id="CHEBI:28938"/>
        <dbReference type="ChEBI" id="CHEBI:29985"/>
        <dbReference type="ChEBI" id="CHEBI:58359"/>
    </reaction>
</comment>
<comment type="catalytic activity">
    <reaction evidence="1">
        <text>UTP + NH4(+) + ATP = CTP + ADP + phosphate + 2 H(+)</text>
        <dbReference type="Rhea" id="RHEA:16597"/>
        <dbReference type="ChEBI" id="CHEBI:15378"/>
        <dbReference type="ChEBI" id="CHEBI:28938"/>
        <dbReference type="ChEBI" id="CHEBI:30616"/>
        <dbReference type="ChEBI" id="CHEBI:37563"/>
        <dbReference type="ChEBI" id="CHEBI:43474"/>
        <dbReference type="ChEBI" id="CHEBI:46398"/>
        <dbReference type="ChEBI" id="CHEBI:456216"/>
    </reaction>
</comment>
<comment type="activity regulation">
    <text evidence="1">Allosterically activated by GTP, when glutamine is the substrate; GTP has no effect on the reaction when ammonia is the substrate. The allosteric effector GTP functions by stabilizing the protein conformation that binds the tetrahedral intermediate(s) formed during glutamine hydrolysis. Inhibited by the product CTP, via allosteric rather than competitive inhibition.</text>
</comment>
<comment type="pathway">
    <text evidence="1">Pyrimidine metabolism; CTP biosynthesis via de novo pathway; CTP from UDP: step 2/2.</text>
</comment>
<comment type="subunit">
    <text evidence="1">Homotetramer.</text>
</comment>
<comment type="miscellaneous">
    <text evidence="1">CTPSs have evolved a hybrid strategy for distinguishing between UTP and CTP. The overlapping regions of the product feedback inhibitory and substrate sites recognize a common feature in both compounds, the triphosphate moiety. To differentiate isosteric substrate and product pyrimidine rings, an additional pocket far from the expected kinase/ligase catalytic site, specifically recognizes the cytosine and ribose portions of the product inhibitor.</text>
</comment>
<comment type="similarity">
    <text evidence="1">Belongs to the CTP synthase family.</text>
</comment>
<gene>
    <name evidence="1" type="primary">pyrG</name>
    <name type="ordered locus">CAB570</name>
</gene>
<name>PYRG_CHLAB</name>
<proteinExistence type="inferred from homology"/>
<organism>
    <name type="scientific">Chlamydia abortus (strain DSM 27085 / S26/3)</name>
    <name type="common">Chlamydophila abortus</name>
    <dbReference type="NCBI Taxonomy" id="218497"/>
    <lineage>
        <taxon>Bacteria</taxon>
        <taxon>Pseudomonadati</taxon>
        <taxon>Chlamydiota</taxon>
        <taxon>Chlamydiia</taxon>
        <taxon>Chlamydiales</taxon>
        <taxon>Chlamydiaceae</taxon>
        <taxon>Chlamydia/Chlamydophila group</taxon>
        <taxon>Chlamydia</taxon>
    </lineage>
</organism>
<reference key="1">
    <citation type="journal article" date="2005" name="Genome Res.">
        <title>The Chlamydophila abortus genome sequence reveals an array of variable proteins that contribute to interspecies variation.</title>
        <authorList>
            <person name="Thomson N.R."/>
            <person name="Yeats C."/>
            <person name="Bell K."/>
            <person name="Holden M.T.G."/>
            <person name="Bentley S.D."/>
            <person name="Livingstone M."/>
            <person name="Cerdeno-Tarraga A.-M."/>
            <person name="Harris B."/>
            <person name="Doggett J."/>
            <person name="Ormond D."/>
            <person name="Mungall K."/>
            <person name="Clarke K."/>
            <person name="Feltwell T."/>
            <person name="Hance Z."/>
            <person name="Sanders M."/>
            <person name="Quail M.A."/>
            <person name="Price C."/>
            <person name="Barrell B.G."/>
            <person name="Parkhill J."/>
            <person name="Longbottom D."/>
        </authorList>
    </citation>
    <scope>NUCLEOTIDE SEQUENCE [LARGE SCALE GENOMIC DNA]</scope>
    <source>
        <strain>DSM 27085 / S26/3</strain>
    </source>
</reference>